<protein>
    <recommendedName>
        <fullName>Exopolysaccharide phosphotransferase CpsY</fullName>
        <ecNumber>2.7.-.-</ecNumber>
    </recommendedName>
    <alternativeName>
        <fullName>Stealth protein CpsY</fullName>
    </alternativeName>
</protein>
<proteinExistence type="inferred from homology"/>
<comment type="similarity">
    <text evidence="1">Belongs to the stealth family.</text>
</comment>
<accession>P9WGD0</accession>
<accession>L0T6I2</accession>
<accession>O06628</accession>
<accession>Q7D992</accession>
<name>CPSY_MYCTO</name>
<sequence length="532" mass="60268">MPKISSRDGGRPAQRTVNPIIVTRRGKIARLESGLTPQEAQIEDLVFLRKVLNRADIPYLLIRNHKNRPVLAINIELRAGLERALAAACATEPMYAKTIDEPGLSPVLVATDGLSQLVDPRVVRLYRRRIAPGGFRYGPAFGVELQFWVYEETVIRCPVENSLSRKVLPRNEITPTNVKLYGYKWPTLDGMFAPHASDVVFDIDMVFSWVDGSDPEFRARRMAQMSQYVVGEGDDAEARIRQIDELKYALRSVNMFAPWIRRIFIATDSTPPPWLAEHPKITIVRAEDHFSDRSALPTYNSHAVESQLHHIPGLSEHFLYSNDDMFFGRPLKASMFFSPGGVTRFIEAKTRIGLGANNPARSGFENAARVNRQLLFDRFGQVITRHLEHTAVPLRKSVLIEMEREFPEEFARTAASPFRSDTDISVTNSFYHYYALMTGRAVPQEKAKVLYVDTTSYAGLRLLPKLRKHRGYDFFCLNDGSFPEVPAAQRAERVVSFLERYFPIPAPWEKIAADVSRRDFAVPRTSAPSEGA</sequence>
<gene>
    <name type="primary">cpsY</name>
    <name type="ordered locus">MT0826</name>
</gene>
<evidence type="ECO:0000305" key="1"/>
<reference key="1">
    <citation type="journal article" date="2002" name="J. Bacteriol.">
        <title>Whole-genome comparison of Mycobacterium tuberculosis clinical and laboratory strains.</title>
        <authorList>
            <person name="Fleischmann R.D."/>
            <person name="Alland D."/>
            <person name="Eisen J.A."/>
            <person name="Carpenter L."/>
            <person name="White O."/>
            <person name="Peterson J.D."/>
            <person name="DeBoy R.T."/>
            <person name="Dodson R.J."/>
            <person name="Gwinn M.L."/>
            <person name="Haft D.H."/>
            <person name="Hickey E.K."/>
            <person name="Kolonay J.F."/>
            <person name="Nelson W.C."/>
            <person name="Umayam L.A."/>
            <person name="Ermolaeva M.D."/>
            <person name="Salzberg S.L."/>
            <person name="Delcher A."/>
            <person name="Utterback T.R."/>
            <person name="Weidman J.F."/>
            <person name="Khouri H.M."/>
            <person name="Gill J."/>
            <person name="Mikula A."/>
            <person name="Bishai W."/>
            <person name="Jacobs W.R. Jr."/>
            <person name="Venter J.C."/>
            <person name="Fraser C.M."/>
        </authorList>
    </citation>
    <scope>NUCLEOTIDE SEQUENCE [LARGE SCALE GENOMIC DNA]</scope>
    <source>
        <strain>CDC 1551 / Oshkosh</strain>
    </source>
</reference>
<feature type="chain" id="PRO_0000428383" description="Exopolysaccharide phosphotransferase CpsY">
    <location>
        <begin position="1"/>
        <end position="532"/>
    </location>
</feature>
<keyword id="KW-0270">Exopolysaccharide synthesis</keyword>
<keyword id="KW-1185">Reference proteome</keyword>
<keyword id="KW-0808">Transferase</keyword>
<organism>
    <name type="scientific">Mycobacterium tuberculosis (strain CDC 1551 / Oshkosh)</name>
    <dbReference type="NCBI Taxonomy" id="83331"/>
    <lineage>
        <taxon>Bacteria</taxon>
        <taxon>Bacillati</taxon>
        <taxon>Actinomycetota</taxon>
        <taxon>Actinomycetes</taxon>
        <taxon>Mycobacteriales</taxon>
        <taxon>Mycobacteriaceae</taxon>
        <taxon>Mycobacterium</taxon>
        <taxon>Mycobacterium tuberculosis complex</taxon>
    </lineage>
</organism>
<dbReference type="EC" id="2.7.-.-"/>
<dbReference type="EMBL" id="AE000516">
    <property type="protein sequence ID" value="AAK45068.1"/>
    <property type="molecule type" value="Genomic_DNA"/>
</dbReference>
<dbReference type="PIR" id="G70536">
    <property type="entry name" value="G70536"/>
</dbReference>
<dbReference type="RefSeq" id="WP_003898594.1">
    <property type="nucleotide sequence ID" value="NZ_KK341227.1"/>
</dbReference>
<dbReference type="SMR" id="P9WGD0"/>
<dbReference type="KEGG" id="mtc:MT0826"/>
<dbReference type="PATRIC" id="fig|83331.31.peg.887"/>
<dbReference type="HOGENOM" id="CLU_033996_0_0_11"/>
<dbReference type="Proteomes" id="UP000001020">
    <property type="component" value="Chromosome"/>
</dbReference>
<dbReference type="GO" id="GO:0016772">
    <property type="term" value="F:transferase activity, transferring phosphorus-containing groups"/>
    <property type="evidence" value="ECO:0007669"/>
    <property type="project" value="InterPro"/>
</dbReference>
<dbReference type="GO" id="GO:0000271">
    <property type="term" value="P:polysaccharide biosynthetic process"/>
    <property type="evidence" value="ECO:0007669"/>
    <property type="project" value="UniProtKB-KW"/>
</dbReference>
<dbReference type="InterPro" id="IPR047141">
    <property type="entry name" value="Stealth"/>
</dbReference>
<dbReference type="InterPro" id="IPR031358">
    <property type="entry name" value="Stealth_CR1"/>
</dbReference>
<dbReference type="InterPro" id="IPR021520">
    <property type="entry name" value="Stealth_CR2"/>
</dbReference>
<dbReference type="InterPro" id="IPR031357">
    <property type="entry name" value="Stealth_CR3"/>
</dbReference>
<dbReference type="InterPro" id="IPR031356">
    <property type="entry name" value="Stealth_CR4"/>
</dbReference>
<dbReference type="PANTHER" id="PTHR24045">
    <property type="match status" value="1"/>
</dbReference>
<dbReference type="PANTHER" id="PTHR24045:SF0">
    <property type="entry name" value="N-ACETYLGLUCOSAMINE-1-PHOSPHOTRANSFERASE SUBUNITS ALPHA_BETA"/>
    <property type="match status" value="1"/>
</dbReference>
<dbReference type="Pfam" id="PF17101">
    <property type="entry name" value="Stealth_CR1"/>
    <property type="match status" value="1"/>
</dbReference>
<dbReference type="Pfam" id="PF11380">
    <property type="entry name" value="Stealth_CR2"/>
    <property type="match status" value="1"/>
</dbReference>
<dbReference type="Pfam" id="PF17102">
    <property type="entry name" value="Stealth_CR3"/>
    <property type="match status" value="1"/>
</dbReference>
<dbReference type="Pfam" id="PF17103">
    <property type="entry name" value="Stealth_CR4"/>
    <property type="match status" value="1"/>
</dbReference>